<feature type="signal peptide">
    <location>
        <begin position="1"/>
        <end position="21"/>
    </location>
</feature>
<feature type="chain" id="PRO_0000072358" description="Syncollin">
    <location>
        <begin position="22"/>
        <end position="134"/>
    </location>
</feature>
<comment type="function">
    <text evidence="5 6 7">Functions in exocytosis in pancreatic acinar cells regulating the fusion of zymogen granules with each other. May have a pore-forming activity on membranes and regulate exocytosis in other exocrine tissues.</text>
</comment>
<comment type="subunit">
    <text evidence="4 9">Monomer and homooligomer; most probably hexameric. Interacts with GP2. According to PubMed:10753942 interaction with syntaxins shown in PubMed:9244306 is physiologically questionable.</text>
</comment>
<comment type="subcellular location">
    <subcellularLocation>
        <location evidence="2 3 4">Zymogen granule membrane</location>
        <topology evidence="2 3 4">Peripheral membrane protein</topology>
        <orientation evidence="2 3 4">Lumenal side</orientation>
    </subcellularLocation>
    <subcellularLocation>
        <location evidence="3">Zymogen granule lumen</location>
    </subcellularLocation>
    <text evidence="3">Associated in a cholesterol-dependent manner with lipid rafts of zymogen granule membranes.</text>
</comment>
<comment type="tissue specificity">
    <text evidence="1 8 9">Specifically expressed in pancreas and also detected in secretory granules of parotid gland (at protein level). Expressed in pancreas, spleen, small intestine, lung and neutrophilic granulocytes (at protein level). Expressed by epithelial cells in duodenum and colon.</text>
</comment>
<comment type="developmental stage">
    <text evidence="1">Expressed in gut after birth.</text>
</comment>
<comment type="induction">
    <text evidence="1">Down-regulated in small intestine upon fasting.</text>
</comment>
<comment type="PTM">
    <text>Contains intrachain disulfide bonds.</text>
</comment>
<comment type="miscellaneous">
    <text>Syncollin comes from the Greek word meaning to glue together.</text>
</comment>
<comment type="sequence caution" evidence="10">
    <conflict type="miscellaneous discrepancy">
        <sequence resource="EMBL-CDS" id="AAC53314"/>
    </conflict>
    <text>Contaminating sequence. Sequence of unknown origin in the N-terminal part.</text>
</comment>
<gene>
    <name type="primary">Sycn</name>
    <name type="synonym">Sip9</name>
</gene>
<accession>O35775</accession>
<keyword id="KW-0968">Cytoplasmic vesicle</keyword>
<keyword id="KW-0903">Direct protein sequencing</keyword>
<keyword id="KW-1015">Disulfide bond</keyword>
<keyword id="KW-0268">Exocytosis</keyword>
<keyword id="KW-0472">Membrane</keyword>
<keyword id="KW-1185">Reference proteome</keyword>
<keyword id="KW-0732">Signal</keyword>
<protein>
    <recommendedName>
        <fullName>Syncollin</fullName>
    </recommendedName>
    <alternativeName>
        <fullName>Proximal small intestine-specific protein 9</fullName>
    </alternativeName>
</protein>
<reference key="1">
    <citation type="journal article" date="1997" name="Cell">
        <title>The secretory granule protein syncollin binds to syntaxin in a Ca2(+)-sensitive manner.</title>
        <authorList>
            <person name="Edwardson J.M."/>
            <person name="An S."/>
            <person name="Jahn R."/>
        </authorList>
    </citation>
    <scope>NUCLEOTIDE SEQUENCE [MRNA]</scope>
    <scope>PROTEIN SEQUENCE OF 102-124</scope>
    <scope>INTERACTION WITH SYNTAXIN-1 AND STX2</scope>
    <scope>TISSUE SPECIFICITY</scope>
    <source>
        <strain>Wistar</strain>
        <tissue>Pancreas</tissue>
    </source>
</reference>
<reference key="2">
    <citation type="journal article" date="2000" name="Am. J. Physiol.">
        <title>Syncollin is differentially expressed in rat proximal small intestine and regulated by feeding behavior.</title>
        <authorList>
            <person name="Tan S."/>
            <person name="Hooi S.C."/>
        </authorList>
    </citation>
    <scope>NUCLEOTIDE SEQUENCE [MRNA]</scope>
    <scope>TISSUE SPECIFICITY</scope>
    <scope>INDUCTION</scope>
    <scope>DEVELOPMENTAL STAGE</scope>
    <source>
        <strain>Sprague-Dawley</strain>
        <tissue>Duodenum</tissue>
    </source>
</reference>
<reference key="3">
    <citation type="journal article" date="2000" name="J. Biol. Chem.">
        <title>Analysis of the association of syncollin with the membrane of the pancreatic zymogen granule.</title>
        <authorList>
            <person name="An S.J."/>
            <person name="Hansen N.J."/>
            <person name="Hodel A."/>
            <person name="Jahn R."/>
            <person name="Edwardson J.M."/>
        </authorList>
    </citation>
    <scope>PARTIAL PROTEIN SEQUENCE</scope>
    <scope>SUBCELLULAR LOCATION</scope>
    <scope>TOPOLOGY</scope>
    <scope>DISULFIDE BONDS</scope>
    <scope>OLIGOMERIZATION</scope>
</reference>
<reference key="4">
    <citation type="journal article" date="2001" name="Biochem. J.">
        <title>Cholesterol-dependent interaction of syncollin with the membrane of the pancreatic zymogen granule.</title>
        <authorList>
            <person name="Hodel A."/>
            <person name="An S.J."/>
            <person name="Hansen N.J."/>
            <person name="Lawrence J."/>
            <person name="Waesle B."/>
            <person name="Schrader M."/>
            <person name="Edwardson J.M."/>
        </authorList>
    </citation>
    <scope>SUBCELLULAR LOCATION</scope>
    <scope>TOPOLOGY</scope>
</reference>
<reference key="5">
    <citation type="journal article" date="2002" name="Biochem. J.">
        <title>Interaction of syncollin with GP-2, the major membrane protein of pancreatic zymogen granules, and association with lipid microdomains.</title>
        <authorList>
            <person name="Kalus I."/>
            <person name="Hodel A."/>
            <person name="Koch A."/>
            <person name="Kleene R."/>
            <person name="Edwardson J.M."/>
            <person name="Schrader M."/>
        </authorList>
    </citation>
    <scope>SUBCELLULAR LOCATION</scope>
    <scope>TOPOLOGY</scope>
    <scope>OLIGOMERIZATION</scope>
    <scope>INTERACTION WITH GP2</scope>
</reference>
<reference key="6">
    <citation type="journal article" date="2002" name="J. Membr. Biol.">
        <title>Syncollin homo-oligomers associate with lipid bilayers in the form of doughnut-shaped structures.</title>
        <authorList>
            <person name="Geisse N.A."/>
            <person name="Waesle B."/>
            <person name="Saslowsky D.E."/>
            <person name="Henderson R.M."/>
            <person name="Edwardson J.M."/>
        </authorList>
    </citation>
    <scope>FUNCTION</scope>
    <scope>OLIGOMERIZATION</scope>
</reference>
<reference key="7">
    <citation type="journal article" date="2005" name="Biochemistry">
        <title>Ectopic expression of syncollin in INS-1 beta-cells sorts it into granules and impairs regulated secretion.</title>
        <authorList>
            <person name="Li J."/>
            <person name="Luo R."/>
            <person name="Hooi S.C."/>
            <person name="Ruga P."/>
            <person name="Zhang J."/>
            <person name="Meda P."/>
            <person name="Li G."/>
        </authorList>
    </citation>
    <scope>FUNCTION</scope>
</reference>
<reference key="8">
    <citation type="journal article" date="2005" name="J. Endocrinol.">
        <title>Intragranular targeting of syncollin, but not a syncollinGFP chimera, inhibits regulated insulin exocytosis in pancreatic beta-cells.</title>
        <authorList>
            <person name="Hays L.B."/>
            <person name="Wicksteed B."/>
            <person name="Wang Y."/>
            <person name="McCuaig J.F."/>
            <person name="Philipson L.H."/>
            <person name="Edwardson J.M."/>
            <person name="Rhodes C.J."/>
        </authorList>
    </citation>
    <scope>FUNCTION</scope>
</reference>
<reference key="9">
    <citation type="journal article" date="2006" name="J. Histochem. Cytochem.">
        <title>The secretory granule protein syncollin localizes to HL-60 cells and neutrophils.</title>
        <authorList>
            <person name="Bach J.-P."/>
            <person name="Borta H."/>
            <person name="Ackermann W."/>
            <person name="Faust F."/>
            <person name="Borchers O."/>
            <person name="Schrader M."/>
        </authorList>
    </citation>
    <scope>TISSUE SPECIFICITY</scope>
</reference>
<sequence>MSPLCLLLLALALVAVPGARGACPVPADLKKSDGTRTCARLYENSDPYYDNCCQGPELSVDPGTDLPYLPSDWSNSASSLVVAQRCELTVWSLPGKRGKTRKFSTGSYPRLEEYRKGIFGTWAKSISGLYCKCY</sequence>
<organism>
    <name type="scientific">Rattus norvegicus</name>
    <name type="common">Rat</name>
    <dbReference type="NCBI Taxonomy" id="10116"/>
    <lineage>
        <taxon>Eukaryota</taxon>
        <taxon>Metazoa</taxon>
        <taxon>Chordata</taxon>
        <taxon>Craniata</taxon>
        <taxon>Vertebrata</taxon>
        <taxon>Euteleostomi</taxon>
        <taxon>Mammalia</taxon>
        <taxon>Eutheria</taxon>
        <taxon>Euarchontoglires</taxon>
        <taxon>Glires</taxon>
        <taxon>Rodentia</taxon>
        <taxon>Myomorpha</taxon>
        <taxon>Muroidea</taxon>
        <taxon>Muridae</taxon>
        <taxon>Murinae</taxon>
        <taxon>Rattus</taxon>
    </lineage>
</organism>
<evidence type="ECO:0000269" key="1">
    <source>
    </source>
</evidence>
<evidence type="ECO:0000269" key="2">
    <source>
    </source>
</evidence>
<evidence type="ECO:0000269" key="3">
    <source>
    </source>
</evidence>
<evidence type="ECO:0000269" key="4">
    <source>
    </source>
</evidence>
<evidence type="ECO:0000269" key="5">
    <source>
    </source>
</evidence>
<evidence type="ECO:0000269" key="6">
    <source>
    </source>
</evidence>
<evidence type="ECO:0000269" key="7">
    <source>
    </source>
</evidence>
<evidence type="ECO:0000269" key="8">
    <source>
    </source>
</evidence>
<evidence type="ECO:0000269" key="9">
    <source>
    </source>
</evidence>
<evidence type="ECO:0000305" key="10"/>
<proteinExistence type="evidence at protein level"/>
<name>SYCN_RAT</name>
<dbReference type="EMBL" id="AF008197">
    <property type="protein sequence ID" value="AAC53314.1"/>
    <property type="status" value="ALT_SEQ"/>
    <property type="molecule type" value="mRNA"/>
</dbReference>
<dbReference type="EMBL" id="AF012887">
    <property type="protein sequence ID" value="AAC27983.1"/>
    <property type="molecule type" value="mRNA"/>
</dbReference>
<dbReference type="RefSeq" id="NP_001376171.1">
    <property type="nucleotide sequence ID" value="NM_001389242.1"/>
</dbReference>
<dbReference type="RefSeq" id="NP_620786.1">
    <property type="nucleotide sequence ID" value="NM_139086.1"/>
</dbReference>
<dbReference type="RefSeq" id="XP_038953631.1">
    <property type="nucleotide sequence ID" value="XM_039097703.2"/>
</dbReference>
<dbReference type="RefSeq" id="XP_038953665.1">
    <property type="nucleotide sequence ID" value="XM_039097737.2"/>
</dbReference>
<dbReference type="RefSeq" id="XP_038953705.1">
    <property type="nucleotide sequence ID" value="XM_039097777.2"/>
</dbReference>
<dbReference type="RefSeq" id="XP_063136867.1">
    <property type="nucleotide sequence ID" value="XM_063280797.1"/>
</dbReference>
<dbReference type="RefSeq" id="XP_063136869.1">
    <property type="nucleotide sequence ID" value="XM_063280799.1"/>
</dbReference>
<dbReference type="SMR" id="O35775"/>
<dbReference type="FunCoup" id="O35775">
    <property type="interactions" value="3"/>
</dbReference>
<dbReference type="STRING" id="10116.ENSRNOP00000026907"/>
<dbReference type="PhosphoSitePlus" id="O35775"/>
<dbReference type="PaxDb" id="10116-ENSRNOP00000026907"/>
<dbReference type="Ensembl" id="ENSRNOT00000026907.6">
    <property type="protein sequence ID" value="ENSRNOP00000026907.3"/>
    <property type="gene ID" value="ENSRNOG00000019879.6"/>
</dbReference>
<dbReference type="GeneID" id="245917"/>
<dbReference type="UCSC" id="RGD:620862">
    <property type="organism name" value="rat"/>
</dbReference>
<dbReference type="AGR" id="RGD:620862"/>
<dbReference type="RGD" id="620862">
    <property type="gene designation" value="Sycn"/>
</dbReference>
<dbReference type="eggNOG" id="ENOG502S3UP">
    <property type="taxonomic scope" value="Eukaryota"/>
</dbReference>
<dbReference type="GeneTree" id="ENSGT00390000014835"/>
<dbReference type="HOGENOM" id="CLU_1890586_0_0_1"/>
<dbReference type="InParanoid" id="O35775"/>
<dbReference type="OMA" id="ALYCRCS"/>
<dbReference type="PhylomeDB" id="O35775"/>
<dbReference type="TreeFam" id="TF338021"/>
<dbReference type="PRO" id="PR:O35775"/>
<dbReference type="Proteomes" id="UP000002494">
    <property type="component" value="Chromosome 1"/>
</dbReference>
<dbReference type="Bgee" id="ENSRNOG00000019879">
    <property type="expression patterns" value="Expressed in pancreas and 14 other cell types or tissues"/>
</dbReference>
<dbReference type="GO" id="GO:0042589">
    <property type="term" value="C:zymogen granule membrane"/>
    <property type="evidence" value="ECO:0007669"/>
    <property type="project" value="UniProtKB-SubCell"/>
</dbReference>
<dbReference type="GO" id="GO:0006887">
    <property type="term" value="P:exocytosis"/>
    <property type="evidence" value="ECO:0007669"/>
    <property type="project" value="UniProtKB-KW"/>
</dbReference>
<dbReference type="GO" id="GO:0017158">
    <property type="term" value="P:regulation of calcium ion-dependent exocytosis"/>
    <property type="evidence" value="ECO:0000304"/>
    <property type="project" value="RGD"/>
</dbReference>
<dbReference type="FunFam" id="2.60.20.10:FF:000014">
    <property type="entry name" value="Syncollin"/>
    <property type="match status" value="1"/>
</dbReference>
<dbReference type="Gene3D" id="2.60.20.10">
    <property type="entry name" value="Crystallins"/>
    <property type="match status" value="1"/>
</dbReference>
<dbReference type="InterPro" id="IPR028137">
    <property type="entry name" value="Syncollin"/>
</dbReference>
<dbReference type="PANTHER" id="PTHR17503">
    <property type="entry name" value="SYNCOLLIN"/>
    <property type="match status" value="1"/>
</dbReference>
<dbReference type="PANTHER" id="PTHR17503:SF0">
    <property type="entry name" value="SYNCOLLIN"/>
    <property type="match status" value="1"/>
</dbReference>
<dbReference type="Pfam" id="PF15138">
    <property type="entry name" value="Syncollin"/>
    <property type="match status" value="1"/>
</dbReference>